<sequence>MYAYIFAFFELITFLVPVLLAVAFLTLVERKVLGYMQFRKGPNVVGLTDFCNLFADGLKLFIKETVKPSSASPYLFFASPVLFLTLALLLWNFMPVTSPALDLQLSLLLVLGLSSLSVYAILGSG</sequence>
<name>NU1M_ARBLI</name>
<comment type="function">
    <text evidence="1">Core subunit of the mitochondrial membrane respiratory chain NADH dehydrogenase (Complex I) that is believed to belong to the minimal assembly required for catalysis. Complex I functions in the transfer of electrons from NADH to the respiratory chain. The immediate electron acceptor for the enzyme is believed to be ubiquinone (By similarity).</text>
</comment>
<comment type="catalytic activity">
    <reaction>
        <text>a ubiquinone + NADH + 5 H(+)(in) = a ubiquinol + NAD(+) + 4 H(+)(out)</text>
        <dbReference type="Rhea" id="RHEA:29091"/>
        <dbReference type="Rhea" id="RHEA-COMP:9565"/>
        <dbReference type="Rhea" id="RHEA-COMP:9566"/>
        <dbReference type="ChEBI" id="CHEBI:15378"/>
        <dbReference type="ChEBI" id="CHEBI:16389"/>
        <dbReference type="ChEBI" id="CHEBI:17976"/>
        <dbReference type="ChEBI" id="CHEBI:57540"/>
        <dbReference type="ChEBI" id="CHEBI:57945"/>
        <dbReference type="EC" id="7.1.1.2"/>
    </reaction>
</comment>
<comment type="subcellular location">
    <subcellularLocation>
        <location evidence="1">Mitochondrion inner membrane</location>
        <topology evidence="1">Multi-pass membrane protein</topology>
    </subcellularLocation>
</comment>
<comment type="similarity">
    <text evidence="3">Belongs to the complex I subunit 1 family.</text>
</comment>
<organism>
    <name type="scientific">Arbacia lixula</name>
    <name type="common">Black urchin</name>
    <name type="synonym">Echinus lixula</name>
    <dbReference type="NCBI Taxonomy" id="7640"/>
    <lineage>
        <taxon>Eukaryota</taxon>
        <taxon>Metazoa</taxon>
        <taxon>Echinodermata</taxon>
        <taxon>Eleutherozoa</taxon>
        <taxon>Echinozoa</taxon>
        <taxon>Echinoidea</taxon>
        <taxon>Euechinoidea</taxon>
        <taxon>Echinacea</taxon>
        <taxon>Arbacioida</taxon>
        <taxon>Arbaciidae</taxon>
        <taxon>Arbacia</taxon>
    </lineage>
</organism>
<keyword id="KW-0249">Electron transport</keyword>
<keyword id="KW-0472">Membrane</keyword>
<keyword id="KW-0496">Mitochondrion</keyword>
<keyword id="KW-0999">Mitochondrion inner membrane</keyword>
<keyword id="KW-0520">NAD</keyword>
<keyword id="KW-0679">Respiratory chain</keyword>
<keyword id="KW-1278">Translocase</keyword>
<keyword id="KW-0812">Transmembrane</keyword>
<keyword id="KW-1133">Transmembrane helix</keyword>
<keyword id="KW-0813">Transport</keyword>
<keyword id="KW-0830">Ubiquinone</keyword>
<proteinExistence type="inferred from homology"/>
<gene>
    <name type="primary">ND1</name>
</gene>
<reference key="1">
    <citation type="journal article" date="1991" name="Mol. Biol. Evol.">
        <title>Mitochondrial DNA in the sea urchin Arbacia lixula: evolutionary inferences from nucleotide sequence analysis.</title>
        <authorList>
            <person name="de Giorgi C."/>
            <person name="Lanave C."/>
            <person name="Musci M.D."/>
            <person name="Saccone C."/>
        </authorList>
    </citation>
    <scope>NUCLEOTIDE SEQUENCE [GENOMIC DNA]</scope>
</reference>
<geneLocation type="mitochondrion"/>
<dbReference type="EC" id="7.1.1.2"/>
<dbReference type="EMBL" id="M74840">
    <property type="protein sequence ID" value="AAA99052.1"/>
    <property type="molecule type" value="Genomic_DNA"/>
</dbReference>
<dbReference type="SMR" id="Q33756"/>
<dbReference type="GO" id="GO:0005743">
    <property type="term" value="C:mitochondrial inner membrane"/>
    <property type="evidence" value="ECO:0007669"/>
    <property type="project" value="UniProtKB-SubCell"/>
</dbReference>
<dbReference type="GO" id="GO:0008137">
    <property type="term" value="F:NADH dehydrogenase (ubiquinone) activity"/>
    <property type="evidence" value="ECO:0007669"/>
    <property type="project" value="UniProtKB-EC"/>
</dbReference>
<dbReference type="GO" id="GO:0009060">
    <property type="term" value="P:aerobic respiration"/>
    <property type="evidence" value="ECO:0007669"/>
    <property type="project" value="TreeGrafter"/>
</dbReference>
<dbReference type="InterPro" id="IPR001694">
    <property type="entry name" value="NADH_UbQ_OxRdtase_su1/FPO"/>
</dbReference>
<dbReference type="PANTHER" id="PTHR11432">
    <property type="entry name" value="NADH DEHYDROGENASE SUBUNIT 1"/>
    <property type="match status" value="1"/>
</dbReference>
<dbReference type="PANTHER" id="PTHR11432:SF3">
    <property type="entry name" value="NADH-UBIQUINONE OXIDOREDUCTASE CHAIN 1"/>
    <property type="match status" value="1"/>
</dbReference>
<dbReference type="Pfam" id="PF00146">
    <property type="entry name" value="NADHdh"/>
    <property type="match status" value="1"/>
</dbReference>
<protein>
    <recommendedName>
        <fullName>NADH-ubiquinone oxidoreductase chain 1</fullName>
        <ecNumber>7.1.1.2</ecNumber>
    </recommendedName>
    <alternativeName>
        <fullName>NADH dehydrogenase subunit 1</fullName>
    </alternativeName>
</protein>
<feature type="chain" id="PRO_0000117345" description="NADH-ubiquinone oxidoreductase chain 1">
    <location>
        <begin position="1"/>
        <end position="125" status="greater than"/>
    </location>
</feature>
<feature type="transmembrane region" description="Helical" evidence="2">
    <location>
        <begin position="5"/>
        <end position="25"/>
    </location>
</feature>
<feature type="transmembrane region" description="Helical" evidence="2">
    <location>
        <begin position="74"/>
        <end position="94"/>
    </location>
</feature>
<feature type="transmembrane region" description="Helical" evidence="2">
    <location>
        <begin position="105"/>
        <end position="125"/>
    </location>
</feature>
<feature type="non-terminal residue">
    <location>
        <position position="125"/>
    </location>
</feature>
<accession>Q33756</accession>
<evidence type="ECO:0000250" key="1"/>
<evidence type="ECO:0000255" key="2"/>
<evidence type="ECO:0000305" key="3"/>